<keyword id="KW-0131">Cell cycle</keyword>
<keyword id="KW-0132">Cell division</keyword>
<keyword id="KW-0143">Chaperone</keyword>
<keyword id="KW-0963">Cytoplasm</keyword>
<keyword id="KW-0413">Isomerase</keyword>
<keyword id="KW-1185">Reference proteome</keyword>
<keyword id="KW-0697">Rotamase</keyword>
<protein>
    <recommendedName>
        <fullName evidence="1">Trigger factor</fullName>
        <shortName evidence="1">TF</shortName>
        <ecNumber evidence="1">5.2.1.8</ecNumber>
    </recommendedName>
    <alternativeName>
        <fullName evidence="1">PPIase</fullName>
    </alternativeName>
</protein>
<dbReference type="EC" id="5.2.1.8" evidence="1"/>
<dbReference type="EMBL" id="AM260479">
    <property type="protein sequence ID" value="CAJ92616.1"/>
    <property type="molecule type" value="Genomic_DNA"/>
</dbReference>
<dbReference type="RefSeq" id="WP_011615107.1">
    <property type="nucleotide sequence ID" value="NC_008313.1"/>
</dbReference>
<dbReference type="SMR" id="Q0KBK5"/>
<dbReference type="STRING" id="381666.H16_A1482"/>
<dbReference type="KEGG" id="reh:H16_A1482"/>
<dbReference type="PATRIC" id="fig|381666.6.peg.1870"/>
<dbReference type="eggNOG" id="COG0544">
    <property type="taxonomic scope" value="Bacteria"/>
</dbReference>
<dbReference type="HOGENOM" id="CLU_033058_2_0_4"/>
<dbReference type="OrthoDB" id="9767721at2"/>
<dbReference type="Proteomes" id="UP000008210">
    <property type="component" value="Chromosome 1"/>
</dbReference>
<dbReference type="GO" id="GO:0005737">
    <property type="term" value="C:cytoplasm"/>
    <property type="evidence" value="ECO:0007669"/>
    <property type="project" value="UniProtKB-SubCell"/>
</dbReference>
<dbReference type="GO" id="GO:0003755">
    <property type="term" value="F:peptidyl-prolyl cis-trans isomerase activity"/>
    <property type="evidence" value="ECO:0007669"/>
    <property type="project" value="UniProtKB-UniRule"/>
</dbReference>
<dbReference type="GO" id="GO:0044183">
    <property type="term" value="F:protein folding chaperone"/>
    <property type="evidence" value="ECO:0007669"/>
    <property type="project" value="TreeGrafter"/>
</dbReference>
<dbReference type="GO" id="GO:0043022">
    <property type="term" value="F:ribosome binding"/>
    <property type="evidence" value="ECO:0007669"/>
    <property type="project" value="TreeGrafter"/>
</dbReference>
<dbReference type="GO" id="GO:0051083">
    <property type="term" value="P:'de novo' cotranslational protein folding"/>
    <property type="evidence" value="ECO:0007669"/>
    <property type="project" value="TreeGrafter"/>
</dbReference>
<dbReference type="GO" id="GO:0051301">
    <property type="term" value="P:cell division"/>
    <property type="evidence" value="ECO:0007669"/>
    <property type="project" value="UniProtKB-KW"/>
</dbReference>
<dbReference type="GO" id="GO:0061077">
    <property type="term" value="P:chaperone-mediated protein folding"/>
    <property type="evidence" value="ECO:0007669"/>
    <property type="project" value="TreeGrafter"/>
</dbReference>
<dbReference type="GO" id="GO:0015031">
    <property type="term" value="P:protein transport"/>
    <property type="evidence" value="ECO:0007669"/>
    <property type="project" value="UniProtKB-UniRule"/>
</dbReference>
<dbReference type="GO" id="GO:0043335">
    <property type="term" value="P:protein unfolding"/>
    <property type="evidence" value="ECO:0007669"/>
    <property type="project" value="TreeGrafter"/>
</dbReference>
<dbReference type="FunFam" id="3.10.50.40:FF:000001">
    <property type="entry name" value="Trigger factor"/>
    <property type="match status" value="1"/>
</dbReference>
<dbReference type="Gene3D" id="3.10.50.40">
    <property type="match status" value="1"/>
</dbReference>
<dbReference type="Gene3D" id="3.30.70.1050">
    <property type="entry name" value="Trigger factor ribosome-binding domain"/>
    <property type="match status" value="1"/>
</dbReference>
<dbReference type="Gene3D" id="1.10.3120.10">
    <property type="entry name" value="Trigger factor, C-terminal domain"/>
    <property type="match status" value="1"/>
</dbReference>
<dbReference type="HAMAP" id="MF_00303">
    <property type="entry name" value="Trigger_factor_Tig"/>
    <property type="match status" value="1"/>
</dbReference>
<dbReference type="InterPro" id="IPR046357">
    <property type="entry name" value="PPIase_dom_sf"/>
</dbReference>
<dbReference type="InterPro" id="IPR001179">
    <property type="entry name" value="PPIase_FKBP_dom"/>
</dbReference>
<dbReference type="InterPro" id="IPR005215">
    <property type="entry name" value="Trig_fac"/>
</dbReference>
<dbReference type="InterPro" id="IPR008880">
    <property type="entry name" value="Trigger_fac_C"/>
</dbReference>
<dbReference type="InterPro" id="IPR037041">
    <property type="entry name" value="Trigger_fac_C_sf"/>
</dbReference>
<dbReference type="InterPro" id="IPR008881">
    <property type="entry name" value="Trigger_fac_ribosome-bd_bac"/>
</dbReference>
<dbReference type="InterPro" id="IPR036611">
    <property type="entry name" value="Trigger_fac_ribosome-bd_sf"/>
</dbReference>
<dbReference type="InterPro" id="IPR027304">
    <property type="entry name" value="Trigger_fact/SurA_dom_sf"/>
</dbReference>
<dbReference type="NCBIfam" id="TIGR00115">
    <property type="entry name" value="tig"/>
    <property type="match status" value="1"/>
</dbReference>
<dbReference type="PANTHER" id="PTHR30560">
    <property type="entry name" value="TRIGGER FACTOR CHAPERONE AND PEPTIDYL-PROLYL CIS/TRANS ISOMERASE"/>
    <property type="match status" value="1"/>
</dbReference>
<dbReference type="PANTHER" id="PTHR30560:SF3">
    <property type="entry name" value="TRIGGER FACTOR-LIKE PROTEIN TIG, CHLOROPLASTIC"/>
    <property type="match status" value="1"/>
</dbReference>
<dbReference type="Pfam" id="PF00254">
    <property type="entry name" value="FKBP_C"/>
    <property type="match status" value="1"/>
</dbReference>
<dbReference type="Pfam" id="PF05698">
    <property type="entry name" value="Trigger_C"/>
    <property type="match status" value="1"/>
</dbReference>
<dbReference type="Pfam" id="PF05697">
    <property type="entry name" value="Trigger_N"/>
    <property type="match status" value="1"/>
</dbReference>
<dbReference type="PIRSF" id="PIRSF003095">
    <property type="entry name" value="Trigger_factor"/>
    <property type="match status" value="1"/>
</dbReference>
<dbReference type="SUPFAM" id="SSF54534">
    <property type="entry name" value="FKBP-like"/>
    <property type="match status" value="1"/>
</dbReference>
<dbReference type="SUPFAM" id="SSF109998">
    <property type="entry name" value="Triger factor/SurA peptide-binding domain-like"/>
    <property type="match status" value="1"/>
</dbReference>
<dbReference type="SUPFAM" id="SSF102735">
    <property type="entry name" value="Trigger factor ribosome-binding domain"/>
    <property type="match status" value="1"/>
</dbReference>
<dbReference type="PROSITE" id="PS50059">
    <property type="entry name" value="FKBP_PPIASE"/>
    <property type="match status" value="1"/>
</dbReference>
<reference key="1">
    <citation type="journal article" date="2006" name="Nat. Biotechnol.">
        <title>Genome sequence of the bioplastic-producing 'Knallgas' bacterium Ralstonia eutropha H16.</title>
        <authorList>
            <person name="Pohlmann A."/>
            <person name="Fricke W.F."/>
            <person name="Reinecke F."/>
            <person name="Kusian B."/>
            <person name="Liesegang H."/>
            <person name="Cramm R."/>
            <person name="Eitinger T."/>
            <person name="Ewering C."/>
            <person name="Poetter M."/>
            <person name="Schwartz E."/>
            <person name="Strittmatter A."/>
            <person name="Voss I."/>
            <person name="Gottschalk G."/>
            <person name="Steinbuechel A."/>
            <person name="Friedrich B."/>
            <person name="Bowien B."/>
        </authorList>
    </citation>
    <scope>NUCLEOTIDE SEQUENCE [LARGE SCALE GENOMIC DNA]</scope>
    <source>
        <strain>ATCC 17699 / DSM 428 / KCTC 22496 / NCIMB 10442 / H16 / Stanier 337</strain>
    </source>
</reference>
<gene>
    <name evidence="1" type="primary">tig</name>
    <name type="ordered locus">H16_A1482</name>
</gene>
<comment type="function">
    <text evidence="1">Involved in protein export. Acts as a chaperone by maintaining the newly synthesized protein in an open conformation. Functions as a peptidyl-prolyl cis-trans isomerase.</text>
</comment>
<comment type="catalytic activity">
    <reaction evidence="1">
        <text>[protein]-peptidylproline (omega=180) = [protein]-peptidylproline (omega=0)</text>
        <dbReference type="Rhea" id="RHEA:16237"/>
        <dbReference type="Rhea" id="RHEA-COMP:10747"/>
        <dbReference type="Rhea" id="RHEA-COMP:10748"/>
        <dbReference type="ChEBI" id="CHEBI:83833"/>
        <dbReference type="ChEBI" id="CHEBI:83834"/>
        <dbReference type="EC" id="5.2.1.8"/>
    </reaction>
</comment>
<comment type="subcellular location">
    <subcellularLocation>
        <location>Cytoplasm</location>
    </subcellularLocation>
    <text evidence="1">About half TF is bound to the ribosome near the polypeptide exit tunnel while the other half is free in the cytoplasm.</text>
</comment>
<comment type="domain">
    <text evidence="1">Consists of 3 domains; the N-terminus binds the ribosome, the middle domain has PPIase activity, while the C-terminus has intrinsic chaperone activity on its own.</text>
</comment>
<comment type="similarity">
    <text evidence="1">Belongs to the FKBP-type PPIase family. Tig subfamily.</text>
</comment>
<organism>
    <name type="scientific">Cupriavidus necator (strain ATCC 17699 / DSM 428 / KCTC 22496 / NCIMB 10442 / H16 / Stanier 337)</name>
    <name type="common">Ralstonia eutropha</name>
    <dbReference type="NCBI Taxonomy" id="381666"/>
    <lineage>
        <taxon>Bacteria</taxon>
        <taxon>Pseudomonadati</taxon>
        <taxon>Pseudomonadota</taxon>
        <taxon>Betaproteobacteria</taxon>
        <taxon>Burkholderiales</taxon>
        <taxon>Burkholderiaceae</taxon>
        <taxon>Cupriavidus</taxon>
    </lineage>
</organism>
<accession>Q0KBK5</accession>
<name>TIG_CUPNH</name>
<proteinExistence type="inferred from homology"/>
<evidence type="ECO:0000255" key="1">
    <source>
        <dbReference type="HAMAP-Rule" id="MF_00303"/>
    </source>
</evidence>
<feature type="chain" id="PRO_1000022739" description="Trigger factor">
    <location>
        <begin position="1"/>
        <end position="451"/>
    </location>
</feature>
<feature type="domain" description="PPIase FKBP-type" evidence="1">
    <location>
        <begin position="173"/>
        <end position="258"/>
    </location>
</feature>
<sequence>MSNVIENLGKLDRKVTLAIPKAEVEKEKQERLVRLSKTVKMSGFRPGKVPMKMVEKQYGQQVEFEVRFDKAARKFFDITKEQDVKVAGQPKFEIKNEGVGEDEVAFDATFEVYPEVTIGDLSAAEVTRTGTEITDAEVDKTIDILRKQRVHYHARGEAGEHGDGGADVAAQNGDRVTLDFVGKIDGEEFAGGKAEDFPFVLGEGRMLPEFEQAALGLKVGESKTFPLAFPEDYHGKEVAGKTAEFTVTLKKIEWAHLPEVNDAFAKSLGIADGSVEKMRADIRENLEREVKRRTHSMLKDQVMEALLKASELEVPKALIEQDQERLVEMARRDLEQRGMPNAKDMPIPAEMFAQQAERRVKLGLILAEIVKANGLEAKADQIKAEIEDFAKSYEDPKEVMRWYYGDQQRLAEMEAYVLENNVVNFVCGKAKVTDKKVSFEELTAEGNQQQA</sequence>